<protein>
    <recommendedName>
        <fullName evidence="4">Omega-hexatoxin-Hmo1b</fullName>
        <shortName evidence="5">Omega-HXTX-Hmo1b</shortName>
    </recommendedName>
</protein>
<feature type="signal peptide" evidence="3">
    <location>
        <begin position="1"/>
        <end position="22"/>
    </location>
</feature>
<feature type="propeptide" id="PRO_0000430916" evidence="1">
    <location>
        <begin position="23"/>
        <end position="45"/>
    </location>
</feature>
<feature type="chain" id="PRO_0000430917" description="Omega-hexatoxin-Hmo1b">
    <location>
        <begin position="48"/>
        <end position="84"/>
    </location>
</feature>
<feature type="site" description="Critical for insecticidal activity" evidence="2">
    <location>
        <position position="57"/>
    </location>
</feature>
<feature type="site" description="Critical for insecticidal activity" evidence="2">
    <location>
        <position position="74"/>
    </location>
</feature>
<feature type="site" description="Critical for insecticidal activity" evidence="2">
    <location>
        <position position="82"/>
    </location>
</feature>
<feature type="disulfide bond" evidence="2">
    <location>
        <begin position="51"/>
        <end position="65"/>
    </location>
</feature>
<feature type="disulfide bond" evidence="2">
    <location>
        <begin position="58"/>
        <end position="69"/>
    </location>
</feature>
<feature type="disulfide bond" evidence="2">
    <location>
        <begin position="64"/>
        <end position="83"/>
    </location>
</feature>
<keyword id="KW-0108">Calcium channel impairing toxin</keyword>
<keyword id="KW-0165">Cleavage on pair of basic residues</keyword>
<keyword id="KW-1015">Disulfide bond</keyword>
<keyword id="KW-0872">Ion channel impairing toxin</keyword>
<keyword id="KW-0960">Knottin</keyword>
<keyword id="KW-0964">Secreted</keyword>
<keyword id="KW-0732">Signal</keyword>
<keyword id="KW-0800">Toxin</keyword>
<keyword id="KW-1218">Voltage-gated calcium channel impairing toxin</keyword>
<name>TO1B_HADMO</name>
<organism>
    <name type="scientific">Hadronyche modesta</name>
    <name type="common">Victorian funnel-web spider</name>
    <dbReference type="NCBI Taxonomy" id="1337084"/>
    <lineage>
        <taxon>Eukaryota</taxon>
        <taxon>Metazoa</taxon>
        <taxon>Ecdysozoa</taxon>
        <taxon>Arthropoda</taxon>
        <taxon>Chelicerata</taxon>
        <taxon>Arachnida</taxon>
        <taxon>Araneae</taxon>
        <taxon>Mygalomorphae</taxon>
        <taxon>Hexathelidae</taxon>
        <taxon>Hadronyche</taxon>
    </lineage>
</organism>
<accession>P0DMQ1</accession>
<proteinExistence type="inferred from homology"/>
<dbReference type="SMR" id="P0DMQ1"/>
<dbReference type="GO" id="GO:0005576">
    <property type="term" value="C:extracellular region"/>
    <property type="evidence" value="ECO:0007669"/>
    <property type="project" value="UniProtKB-SubCell"/>
</dbReference>
<dbReference type="GO" id="GO:0019855">
    <property type="term" value="F:calcium channel inhibitor activity"/>
    <property type="evidence" value="ECO:0007669"/>
    <property type="project" value="InterPro"/>
</dbReference>
<dbReference type="GO" id="GO:0090729">
    <property type="term" value="F:toxin activity"/>
    <property type="evidence" value="ECO:0007669"/>
    <property type="project" value="UniProtKB-KW"/>
</dbReference>
<dbReference type="GO" id="GO:0006952">
    <property type="term" value="P:defense response"/>
    <property type="evidence" value="ECO:0007669"/>
    <property type="project" value="InterPro"/>
</dbReference>
<dbReference type="InterPro" id="IPR009415">
    <property type="entry name" value="Omega-atracotox"/>
</dbReference>
<dbReference type="Pfam" id="PF06357">
    <property type="entry name" value="Omega-toxin"/>
    <property type="match status" value="1"/>
</dbReference>
<dbReference type="SUPFAM" id="SSF57059">
    <property type="entry name" value="omega toxin-like"/>
    <property type="match status" value="1"/>
</dbReference>
<evidence type="ECO:0000250" key="1"/>
<evidence type="ECO:0000250" key="2">
    <source>
        <dbReference type="UniProtKB" id="P56207"/>
    </source>
</evidence>
<evidence type="ECO:0000255" key="3"/>
<evidence type="ECO:0000303" key="4">
    <source>
    </source>
</evidence>
<evidence type="ECO:0000305" key="5">
    <source>
    </source>
</evidence>
<comment type="function">
    <text evidence="2">Inhibits insect, but not mammalian, voltage-gated calcium channels (Cav).</text>
</comment>
<comment type="subcellular location">
    <subcellularLocation>
        <location evidence="5">Secreted</location>
    </subcellularLocation>
</comment>
<comment type="tissue specificity">
    <text evidence="5">Expressed by the venom gland.</text>
</comment>
<comment type="domain">
    <text evidence="1">The presence of a 'disulfide through disulfide knot' structurally defines this protein as a knottin.</text>
</comment>
<comment type="similarity">
    <text evidence="4">Belongs to the neurotoxin 08 (Shiva) family. 01 (omega toxin) subfamily.</text>
</comment>
<comment type="caution">
    <text>Signal and propeptide sequences are imported from ArachnoServer.</text>
</comment>
<sequence>MNTATGVIALLVLATVIGCIEAEDTREDFQGGFESDDGEAAEKIFRRAPVCTRTDQPCPYDQDCCSGSCTLKKNENGNLVKRCD</sequence>
<reference key="1">
    <citation type="journal article" date="2014" name="BMC Genomics">
        <title>Diversification of a single ancestral gene into a successful toxin superfamily in highly venomous Australian funnel-web spiders.</title>
        <authorList>
            <person name="Pineda S.S."/>
            <person name="Sollod B.L."/>
            <person name="Wilson D."/>
            <person name="Darling A."/>
            <person name="Sunagar K."/>
            <person name="Undheim E.A."/>
            <person name="Kely L."/>
            <person name="Antunes A."/>
            <person name="Fry B.G."/>
            <person name="King G.F."/>
        </authorList>
    </citation>
    <scope>NUCLEOTIDE SEQUENCE [MRNA]</scope>
    <source>
        <tissue>Venom gland</tissue>
    </source>
</reference>